<organism>
    <name type="scientific">Escherichia coli (strain K12)</name>
    <dbReference type="NCBI Taxonomy" id="83333"/>
    <lineage>
        <taxon>Bacteria</taxon>
        <taxon>Pseudomonadati</taxon>
        <taxon>Pseudomonadota</taxon>
        <taxon>Gammaproteobacteria</taxon>
        <taxon>Enterobacterales</taxon>
        <taxon>Enterobacteriaceae</taxon>
        <taxon>Escherichia</taxon>
    </lineage>
</organism>
<evidence type="ECO:0000250" key="1"/>
<evidence type="ECO:0000250" key="2">
    <source>
        <dbReference type="UniProtKB" id="Q51739"/>
    </source>
</evidence>
<evidence type="ECO:0000269" key="3">
    <source>
    </source>
</evidence>
<evidence type="ECO:0000305" key="4"/>
<accession>P76192</accession>
<accession>P71277</accession>
<accession>Q2MB58</accession>
<proteinExistence type="evidence at transcript level"/>
<protein>
    <recommendedName>
        <fullName>Uncharacterized oxidoreductase YdhV</fullName>
        <ecNumber>1.-.-.-</ecNumber>
    </recommendedName>
</protein>
<reference key="1">
    <citation type="journal article" date="1997" name="J. Bacteriol.">
        <title>Analysis of the boundaries of Salmonella pathogenicity island 2 and the corresponding chromosomal region of Escherichia coli K-12.</title>
        <authorList>
            <person name="Hensel M."/>
            <person name="Shea J.E."/>
            <person name="Baeumler A.J."/>
            <person name="Gleeson C."/>
            <person name="Blattner F.R."/>
            <person name="Holden D.W."/>
        </authorList>
    </citation>
    <scope>NUCLEOTIDE SEQUENCE [GENOMIC DNA]</scope>
    <source>
        <strain>K12 / MG1655 / ATCC 47076</strain>
    </source>
</reference>
<reference key="2">
    <citation type="journal article" date="1997" name="Science">
        <title>The complete genome sequence of Escherichia coli K-12.</title>
        <authorList>
            <person name="Blattner F.R."/>
            <person name="Plunkett G. III"/>
            <person name="Bloch C.A."/>
            <person name="Perna N.T."/>
            <person name="Burland V."/>
            <person name="Riley M."/>
            <person name="Collado-Vides J."/>
            <person name="Glasner J.D."/>
            <person name="Rode C.K."/>
            <person name="Mayhew G.F."/>
            <person name="Gregor J."/>
            <person name="Davis N.W."/>
            <person name="Kirkpatrick H.A."/>
            <person name="Goeden M.A."/>
            <person name="Rose D.J."/>
            <person name="Mau B."/>
            <person name="Shao Y."/>
        </authorList>
    </citation>
    <scope>NUCLEOTIDE SEQUENCE [LARGE SCALE GENOMIC DNA]</scope>
    <source>
        <strain>K12 / MG1655 / ATCC 47076</strain>
    </source>
</reference>
<reference key="3">
    <citation type="journal article" date="2006" name="Mol. Syst. Biol.">
        <title>Highly accurate genome sequences of Escherichia coli K-12 strains MG1655 and W3110.</title>
        <authorList>
            <person name="Hayashi K."/>
            <person name="Morooka N."/>
            <person name="Yamamoto Y."/>
            <person name="Fujita K."/>
            <person name="Isono K."/>
            <person name="Choi S."/>
            <person name="Ohtsubo E."/>
            <person name="Baba T."/>
            <person name="Wanner B.L."/>
            <person name="Mori H."/>
            <person name="Horiuchi T."/>
        </authorList>
    </citation>
    <scope>NUCLEOTIDE SEQUENCE [LARGE SCALE GENOMIC DNA]</scope>
    <source>
        <strain>K12 / W3110 / ATCC 27325 / DSM 5911</strain>
    </source>
</reference>
<reference key="4">
    <citation type="journal article" date="2008" name="Microbiology">
        <title>Characterization of the Escherichia coli K-12 ydhYVWXUT operon: regulation by FNR, NarL and NarP.</title>
        <authorList>
            <person name="Partridge J.D."/>
            <person name="Browning D.F."/>
            <person name="Xu M."/>
            <person name="Newnham L.J."/>
            <person name="Scott C."/>
            <person name="Roberts R.E."/>
            <person name="Poole R.K."/>
            <person name="Green J."/>
        </authorList>
    </citation>
    <scope>INDUCTION</scope>
    <source>
        <strain>K12</strain>
    </source>
</reference>
<gene>
    <name type="primary">ydhV</name>
    <name type="ordered locus">b1673</name>
    <name type="ordered locus">JW5272</name>
</gene>
<feature type="chain" id="PRO_0000168980" description="Uncharacterized oxidoreductase YdhV">
    <location>
        <begin position="1"/>
        <end position="700"/>
    </location>
</feature>
<feature type="binding site" evidence="2">
    <location>
        <position position="307"/>
    </location>
    <ligand>
        <name>[4Fe-4S] cluster</name>
        <dbReference type="ChEBI" id="CHEBI:49883"/>
    </ligand>
</feature>
<feature type="binding site" evidence="2">
    <location>
        <position position="310"/>
    </location>
    <ligand>
        <name>[4Fe-4S] cluster</name>
        <dbReference type="ChEBI" id="CHEBI:49883"/>
    </ligand>
</feature>
<feature type="binding site" evidence="2">
    <location>
        <position position="314"/>
    </location>
    <ligand>
        <name>[4Fe-4S] cluster</name>
        <dbReference type="ChEBI" id="CHEBI:49883"/>
    </ligand>
</feature>
<feature type="binding site" evidence="2">
    <location>
        <position position="558"/>
    </location>
    <ligand>
        <name>[4Fe-4S] cluster</name>
        <dbReference type="ChEBI" id="CHEBI:49883"/>
    </ligand>
</feature>
<dbReference type="EC" id="1.-.-.-"/>
<dbReference type="EMBL" id="U68703">
    <property type="protein sequence ID" value="AAB47949.1"/>
    <property type="status" value="ALT_INIT"/>
    <property type="molecule type" value="Genomic_DNA"/>
</dbReference>
<dbReference type="EMBL" id="U00096">
    <property type="protein sequence ID" value="AAC74743.1"/>
    <property type="molecule type" value="Genomic_DNA"/>
</dbReference>
<dbReference type="EMBL" id="AP009048">
    <property type="protein sequence ID" value="BAE76498.1"/>
    <property type="molecule type" value="Genomic_DNA"/>
</dbReference>
<dbReference type="PIR" id="A64925">
    <property type="entry name" value="A64925"/>
</dbReference>
<dbReference type="RefSeq" id="NP_416188.1">
    <property type="nucleotide sequence ID" value="NC_000913.3"/>
</dbReference>
<dbReference type="RefSeq" id="WP_001273527.1">
    <property type="nucleotide sequence ID" value="NZ_SSZK01000001.1"/>
</dbReference>
<dbReference type="SMR" id="P76192"/>
<dbReference type="BioGRID" id="4260274">
    <property type="interactions" value="17"/>
</dbReference>
<dbReference type="FunCoup" id="P76192">
    <property type="interactions" value="74"/>
</dbReference>
<dbReference type="STRING" id="511145.b1673"/>
<dbReference type="jPOST" id="P76192"/>
<dbReference type="PaxDb" id="511145-b1673"/>
<dbReference type="EnsemblBacteria" id="AAC74743">
    <property type="protein sequence ID" value="AAC74743"/>
    <property type="gene ID" value="b1673"/>
</dbReference>
<dbReference type="GeneID" id="948756"/>
<dbReference type="KEGG" id="ecj:JW5272"/>
<dbReference type="KEGG" id="eco:b1673"/>
<dbReference type="KEGG" id="ecoc:C3026_09590"/>
<dbReference type="PATRIC" id="fig|1411691.4.peg.586"/>
<dbReference type="EchoBASE" id="EB3714"/>
<dbReference type="eggNOG" id="COG2414">
    <property type="taxonomic scope" value="Bacteria"/>
</dbReference>
<dbReference type="HOGENOM" id="CLU_020364_0_0_6"/>
<dbReference type="InParanoid" id="P76192"/>
<dbReference type="OMA" id="EYNSIPW"/>
<dbReference type="OrthoDB" id="9763894at2"/>
<dbReference type="PhylomeDB" id="P76192"/>
<dbReference type="BioCyc" id="EcoCyc:G6901-MONOMER"/>
<dbReference type="PRO" id="PR:P76192"/>
<dbReference type="Proteomes" id="UP000000625">
    <property type="component" value="Chromosome"/>
</dbReference>
<dbReference type="GO" id="GO:0051539">
    <property type="term" value="F:4 iron, 4 sulfur cluster binding"/>
    <property type="evidence" value="ECO:0007669"/>
    <property type="project" value="UniProtKB-KW"/>
</dbReference>
<dbReference type="GO" id="GO:0009055">
    <property type="term" value="F:electron transfer activity"/>
    <property type="evidence" value="ECO:0007669"/>
    <property type="project" value="InterPro"/>
</dbReference>
<dbReference type="GO" id="GO:0051536">
    <property type="term" value="F:iron-sulfur cluster binding"/>
    <property type="evidence" value="ECO:0000314"/>
    <property type="project" value="EcoCyc"/>
</dbReference>
<dbReference type="GO" id="GO:0046872">
    <property type="term" value="F:metal ion binding"/>
    <property type="evidence" value="ECO:0007669"/>
    <property type="project" value="UniProtKB-KW"/>
</dbReference>
<dbReference type="GO" id="GO:0043546">
    <property type="term" value="F:molybdopterin cofactor binding"/>
    <property type="evidence" value="ECO:0000314"/>
    <property type="project" value="EcoCyc"/>
</dbReference>
<dbReference type="GO" id="GO:0016625">
    <property type="term" value="F:oxidoreductase activity, acting on the aldehyde or oxo group of donors, iron-sulfur protein as acceptor"/>
    <property type="evidence" value="ECO:0007669"/>
    <property type="project" value="InterPro"/>
</dbReference>
<dbReference type="Gene3D" id="1.10.569.10">
    <property type="entry name" value="Aldehyde Ferredoxin Oxidoreductase Protein, subunit A, domain 2"/>
    <property type="match status" value="1"/>
</dbReference>
<dbReference type="Gene3D" id="1.10.599.10">
    <property type="entry name" value="Aldehyde Ferredoxin Oxidoreductase Protein, subunit A, domain 3"/>
    <property type="match status" value="1"/>
</dbReference>
<dbReference type="Gene3D" id="3.60.9.10">
    <property type="entry name" value="Aldehyde ferredoxin oxidoreductase, N-terminal domain"/>
    <property type="match status" value="1"/>
</dbReference>
<dbReference type="InterPro" id="IPR013984">
    <property type="entry name" value="Ald_Fedxn_OxRdtase_dom2"/>
</dbReference>
<dbReference type="InterPro" id="IPR013985">
    <property type="entry name" value="Ald_Fedxn_OxRdtase_dom3"/>
</dbReference>
<dbReference type="InterPro" id="IPR013983">
    <property type="entry name" value="Ald_Fedxn_OxRdtase_N"/>
</dbReference>
<dbReference type="InterPro" id="IPR036503">
    <property type="entry name" value="Ald_Fedxn_OxRdtase_N_sf"/>
</dbReference>
<dbReference type="InterPro" id="IPR001203">
    <property type="entry name" value="OxRdtase_Ald_Fedxn_C"/>
</dbReference>
<dbReference type="InterPro" id="IPR036021">
    <property type="entry name" value="Tungsten_al_ferr_oxy-like_C"/>
</dbReference>
<dbReference type="InterPro" id="IPR051919">
    <property type="entry name" value="W-dependent_AOR"/>
</dbReference>
<dbReference type="NCBIfam" id="NF007354">
    <property type="entry name" value="PRK09849.1"/>
    <property type="match status" value="1"/>
</dbReference>
<dbReference type="PANTHER" id="PTHR30038">
    <property type="entry name" value="ALDEHYDE FERREDOXIN OXIDOREDUCTASE"/>
    <property type="match status" value="1"/>
</dbReference>
<dbReference type="PANTHER" id="PTHR30038:SF0">
    <property type="entry name" value="TUNGSTEN-CONTAINING ALDEHYDE FERREDOXIN OXIDOREDUCTASE"/>
    <property type="match status" value="1"/>
</dbReference>
<dbReference type="Pfam" id="PF01314">
    <property type="entry name" value="AFOR_C"/>
    <property type="match status" value="1"/>
</dbReference>
<dbReference type="Pfam" id="PF02730">
    <property type="entry name" value="AFOR_N"/>
    <property type="match status" value="1"/>
</dbReference>
<dbReference type="SMART" id="SM00790">
    <property type="entry name" value="AFOR_N"/>
    <property type="match status" value="1"/>
</dbReference>
<dbReference type="SUPFAM" id="SSF48310">
    <property type="entry name" value="Aldehyde ferredoxin oxidoreductase, C-terminal domains"/>
    <property type="match status" value="1"/>
</dbReference>
<dbReference type="SUPFAM" id="SSF56228">
    <property type="entry name" value="Aldehyde ferredoxin oxidoreductase, N-terminal domain"/>
    <property type="match status" value="1"/>
</dbReference>
<sequence length="700" mass="77877">MANGWTGNILRVNLTTGNITLEDSSKFKSFVGGMGFGYKIMYDEVPPGTKPFDEANKLVFATGPLTGSGAPCSSRVNITSLSTFTKGNLVVDAHMGGFFAAQMKFAGYDVIIIEGKAKSPVWLKIKDDKVSLEKADFLWGKGTRATTEEICRLTSPETCVAAIGQAGENLVPLSGMLNSRNHSGGAGTGAIMGSKNLKAIAVEGTKGVNIADRQEMKRLNDYMMTELIGANNNHVVPSTPQSWAEYSDPKSRWTARKGLFWGAAEGGPIETGEIPPGNQNTVGFRTYKSVFDLGPAAEKYTVKMSGCHSCPIRCMTQMNIPRVKEFGVPSTGGNTCVANFVHTTIFPNGPKDFEDKDDGRVIGNLVGLNLFDDYGLWCNYGQLHRDFTYCYSKGVFKRVLPAEEYAEIRWDQLEAGDVNFIKDFYYRLAHRVGELSHLADGSYAIAERWNLGEEYWGYAKNKLWSPFGYPVHHANEASAQVGSIVNCMFNRDCMTHTHINFIGSGLPLKLQREVAKELFGSEDAYDETKNYTPINDAKIKYAKWSLLRVCLHNAVTLCNWVWPMTVSPLKSRNYRGDLALEAKFFKAITGEEMTQEKLDLAAERIFTLHRAYTVKLMQTKDMRNEHDLICSWVFDKDPQIPVFTEGTDKMDRDDMHASLTMFYKEMGWDPQLGCPTRETLQRLGLEDIAADLAAHNLLPA</sequence>
<comment type="cofactor">
    <cofactor evidence="2">
        <name>[4Fe-4S] cluster</name>
        <dbReference type="ChEBI" id="CHEBI:49883"/>
    </cofactor>
    <text evidence="2">Binds 1 [4Fe-4S] cluster per subunit.</text>
</comment>
<comment type="cofactor">
    <cofactor evidence="1">
        <name>Mo-molybdopterin</name>
        <dbReference type="ChEBI" id="CHEBI:71302"/>
    </cofactor>
    <cofactor evidence="1">
        <name>tungstopterin</name>
        <dbReference type="ChEBI" id="CHEBI:30402"/>
    </cofactor>
    <text evidence="1">Binds 1 Mo-molybdopterin (Mo-MPT) or 1 tungstopterin cofactor per subunit.</text>
</comment>
<comment type="induction">
    <text evidence="3">Up-regulated by the oxygen-responsive transcription factor FNR under anaerobic conditions. Repressed in the presence of nitrate or nitrite via the two-component systems NarXL and NarPQ, respectively.</text>
</comment>
<comment type="similarity">
    <text evidence="4">Belongs to the AOR/FOR family.</text>
</comment>
<comment type="sequence caution" evidence="4">
    <conflict type="erroneous initiation">
        <sequence resource="EMBL-CDS" id="AAB47949"/>
    </conflict>
    <text>Extended N-terminus.</text>
</comment>
<name>YDHV_ECOLI</name>
<keyword id="KW-0004">4Fe-4S</keyword>
<keyword id="KW-0408">Iron</keyword>
<keyword id="KW-0411">Iron-sulfur</keyword>
<keyword id="KW-0479">Metal-binding</keyword>
<keyword id="KW-0560">Oxidoreductase</keyword>
<keyword id="KW-1185">Reference proteome</keyword>